<reference key="1">
    <citation type="journal article" date="1997" name="Nature">
        <title>Genomic sequence of a Lyme disease spirochaete, Borrelia burgdorferi.</title>
        <authorList>
            <person name="Fraser C.M."/>
            <person name="Casjens S."/>
            <person name="Huang W.M."/>
            <person name="Sutton G.G."/>
            <person name="Clayton R.A."/>
            <person name="Lathigra R."/>
            <person name="White O."/>
            <person name="Ketchum K.A."/>
            <person name="Dodson R.J."/>
            <person name="Hickey E.K."/>
            <person name="Gwinn M.L."/>
            <person name="Dougherty B.A."/>
            <person name="Tomb J.-F."/>
            <person name="Fleischmann R.D."/>
            <person name="Richardson D.L."/>
            <person name="Peterson J.D."/>
            <person name="Kerlavage A.R."/>
            <person name="Quackenbush J."/>
            <person name="Salzberg S.L."/>
            <person name="Hanson M."/>
            <person name="van Vugt R."/>
            <person name="Palmer N."/>
            <person name="Adams M.D."/>
            <person name="Gocayne J.D."/>
            <person name="Weidman J.F."/>
            <person name="Utterback T.R."/>
            <person name="Watthey L."/>
            <person name="McDonald L.A."/>
            <person name="Artiach P."/>
            <person name="Bowman C."/>
            <person name="Garland S.A."/>
            <person name="Fujii C."/>
            <person name="Cotton M.D."/>
            <person name="Horst K."/>
            <person name="Roberts K.M."/>
            <person name="Hatch B."/>
            <person name="Smith H.O."/>
            <person name="Venter J.C."/>
        </authorList>
    </citation>
    <scope>NUCLEOTIDE SEQUENCE [LARGE SCALE GENOMIC DNA]</scope>
    <source>
        <strain>ATCC 35210 / DSM 4680 / CIP 102532 / B31</strain>
    </source>
</reference>
<protein>
    <recommendedName>
        <fullName evidence="1">Ribosome maturation factor RimP</fullName>
    </recommendedName>
</protein>
<accession>O51739</accession>
<evidence type="ECO:0000255" key="1">
    <source>
        <dbReference type="HAMAP-Rule" id="MF_01077"/>
    </source>
</evidence>
<evidence type="ECO:0000305" key="2"/>
<comment type="function">
    <text evidence="1">Required for maturation of 30S ribosomal subunits.</text>
</comment>
<comment type="subcellular location">
    <subcellularLocation>
        <location evidence="1">Cytoplasm</location>
    </subcellularLocation>
</comment>
<comment type="similarity">
    <text evidence="1">Belongs to the RimP family.</text>
</comment>
<comment type="sequence caution" evidence="2">
    <conflict type="erroneous initiation">
        <sequence resource="EMBL-CDS" id="AAC67155"/>
    </conflict>
</comment>
<sequence length="145" mass="17079">MIKYFDKNNEVFNLIKDLTGRLNVEILEINIFRNKNNGKIQIVLYSKNFSLDIDFLTDLHKMILLILEANLKYGFTLELSTPGIDRKIKSDREFKIFEGKKIKLMLDNEFEEGFILESKPKSFIFKTDSKEVNVFYSDVKKARLV</sequence>
<proteinExistence type="inferred from homology"/>
<gene>
    <name evidence="1" type="primary">rimP</name>
    <name type="ordered locus">BB_0799</name>
</gene>
<name>RIMP_BORBU</name>
<keyword id="KW-0963">Cytoplasm</keyword>
<keyword id="KW-1185">Reference proteome</keyword>
<keyword id="KW-0690">Ribosome biogenesis</keyword>
<organism>
    <name type="scientific">Borreliella burgdorferi (strain ATCC 35210 / DSM 4680 / CIP 102532 / B31)</name>
    <name type="common">Borrelia burgdorferi</name>
    <dbReference type="NCBI Taxonomy" id="224326"/>
    <lineage>
        <taxon>Bacteria</taxon>
        <taxon>Pseudomonadati</taxon>
        <taxon>Spirochaetota</taxon>
        <taxon>Spirochaetia</taxon>
        <taxon>Spirochaetales</taxon>
        <taxon>Borreliaceae</taxon>
        <taxon>Borreliella</taxon>
    </lineage>
</organism>
<feature type="chain" id="PRO_0000181850" description="Ribosome maturation factor RimP">
    <location>
        <begin position="1"/>
        <end position="145"/>
    </location>
</feature>
<dbReference type="EMBL" id="AE000783">
    <property type="protein sequence ID" value="AAC67155.1"/>
    <property type="status" value="ALT_INIT"/>
    <property type="molecule type" value="Genomic_DNA"/>
</dbReference>
<dbReference type="PIR" id="F70199">
    <property type="entry name" value="F70199"/>
</dbReference>
<dbReference type="RefSeq" id="NP_212933.1">
    <property type="nucleotide sequence ID" value="NC_001318.1"/>
</dbReference>
<dbReference type="RefSeq" id="WP_002660709.1">
    <property type="nucleotide sequence ID" value="NC_001318.1"/>
</dbReference>
<dbReference type="SMR" id="O51739"/>
<dbReference type="STRING" id="224326.BB_0799"/>
<dbReference type="PaxDb" id="224326-BB_0799"/>
<dbReference type="EnsemblBacteria" id="AAC67155">
    <property type="protein sequence ID" value="AAC67155"/>
    <property type="gene ID" value="BB_0799"/>
</dbReference>
<dbReference type="KEGG" id="bbu:BB_0799"/>
<dbReference type="PATRIC" id="fig|224326.49.peg.1191"/>
<dbReference type="HOGENOM" id="CLU_070525_4_1_12"/>
<dbReference type="OrthoDB" id="361904at2"/>
<dbReference type="Proteomes" id="UP000001807">
    <property type="component" value="Chromosome"/>
</dbReference>
<dbReference type="GO" id="GO:0005829">
    <property type="term" value="C:cytosol"/>
    <property type="evidence" value="ECO:0007669"/>
    <property type="project" value="TreeGrafter"/>
</dbReference>
<dbReference type="GO" id="GO:0000028">
    <property type="term" value="P:ribosomal small subunit assembly"/>
    <property type="evidence" value="ECO:0007669"/>
    <property type="project" value="TreeGrafter"/>
</dbReference>
<dbReference type="GO" id="GO:0006412">
    <property type="term" value="P:translation"/>
    <property type="evidence" value="ECO:0007669"/>
    <property type="project" value="TreeGrafter"/>
</dbReference>
<dbReference type="HAMAP" id="MF_01077">
    <property type="entry name" value="RimP"/>
    <property type="match status" value="1"/>
</dbReference>
<dbReference type="InterPro" id="IPR003728">
    <property type="entry name" value="Ribosome_maturation_RimP"/>
</dbReference>
<dbReference type="InterPro" id="IPR028989">
    <property type="entry name" value="RimP_N"/>
</dbReference>
<dbReference type="InterPro" id="IPR035956">
    <property type="entry name" value="RimP_N_sf"/>
</dbReference>
<dbReference type="NCBIfam" id="NF011223">
    <property type="entry name" value="PRK14630.1"/>
    <property type="match status" value="1"/>
</dbReference>
<dbReference type="PANTHER" id="PTHR33867">
    <property type="entry name" value="RIBOSOME MATURATION FACTOR RIMP"/>
    <property type="match status" value="1"/>
</dbReference>
<dbReference type="PANTHER" id="PTHR33867:SF1">
    <property type="entry name" value="RIBOSOME MATURATION FACTOR RIMP"/>
    <property type="match status" value="1"/>
</dbReference>
<dbReference type="Pfam" id="PF02576">
    <property type="entry name" value="RimP_N"/>
    <property type="match status" value="1"/>
</dbReference>
<dbReference type="SUPFAM" id="SSF75420">
    <property type="entry name" value="YhbC-like, N-terminal domain"/>
    <property type="match status" value="1"/>
</dbReference>